<dbReference type="EMBL" id="AF075602">
    <property type="protein sequence ID" value="AAD43140.1"/>
    <property type="molecule type" value="mRNA"/>
</dbReference>
<dbReference type="RefSeq" id="NP_001003170.1">
    <property type="nucleotide sequence ID" value="NM_001003170.1"/>
</dbReference>
<dbReference type="SMR" id="Q9XT82"/>
<dbReference type="FunCoup" id="Q9XT82">
    <property type="interactions" value="155"/>
</dbReference>
<dbReference type="STRING" id="9615.ENSCAFP00000021671"/>
<dbReference type="BindingDB" id="Q9XT82"/>
<dbReference type="GlyCosmos" id="Q9XT82">
    <property type="glycosylation" value="3 sites, No reported glycans"/>
</dbReference>
<dbReference type="PaxDb" id="9612-ENSCAFP00000021671"/>
<dbReference type="Ensembl" id="ENSCAFT00000023338.5">
    <property type="protein sequence ID" value="ENSCAFP00000021671.5"/>
    <property type="gene ID" value="ENSCAFG00000014701.5"/>
</dbReference>
<dbReference type="Ensembl" id="ENSCAFT00030007739.1">
    <property type="protein sequence ID" value="ENSCAFP00030006785.1"/>
    <property type="gene ID" value="ENSCAFG00030004194.1"/>
</dbReference>
<dbReference type="Ensembl" id="ENSCAFT00040008881.1">
    <property type="protein sequence ID" value="ENSCAFP00040007709.1"/>
    <property type="gene ID" value="ENSCAFG00040004719.1"/>
</dbReference>
<dbReference type="Ensembl" id="ENSCAFT00845006662.1">
    <property type="protein sequence ID" value="ENSCAFP00845005301.1"/>
    <property type="gene ID" value="ENSCAFG00845003728.1"/>
</dbReference>
<dbReference type="GeneID" id="403797"/>
<dbReference type="KEGG" id="cfa:403797"/>
<dbReference type="CTD" id="5732"/>
<dbReference type="VEuPathDB" id="HostDB:ENSCAFG00845003728"/>
<dbReference type="VGNC" id="VGNC:45143">
    <property type="gene designation" value="PTGER2"/>
</dbReference>
<dbReference type="eggNOG" id="KOG3656">
    <property type="taxonomic scope" value="Eukaryota"/>
</dbReference>
<dbReference type="GeneTree" id="ENSGT01050000244902"/>
<dbReference type="InParanoid" id="Q9XT82"/>
<dbReference type="OrthoDB" id="5959154at2759"/>
<dbReference type="Reactome" id="R-CFA-391908">
    <property type="pathway name" value="Prostanoid ligand receptors"/>
</dbReference>
<dbReference type="Proteomes" id="UP000002254">
    <property type="component" value="Chromosome 8"/>
</dbReference>
<dbReference type="Proteomes" id="UP000694429">
    <property type="component" value="Chromosome 8"/>
</dbReference>
<dbReference type="Proteomes" id="UP000694542">
    <property type="component" value="Chromosome 8"/>
</dbReference>
<dbReference type="Proteomes" id="UP000805418">
    <property type="component" value="Chromosome 8"/>
</dbReference>
<dbReference type="GO" id="GO:0005886">
    <property type="term" value="C:plasma membrane"/>
    <property type="evidence" value="ECO:0007669"/>
    <property type="project" value="UniProtKB-SubCell"/>
</dbReference>
<dbReference type="GO" id="GO:0004957">
    <property type="term" value="F:prostaglandin E receptor activity"/>
    <property type="evidence" value="ECO:0007669"/>
    <property type="project" value="Ensembl"/>
</dbReference>
<dbReference type="GO" id="GO:0007189">
    <property type="term" value="P:adenylate cyclase-activating G protein-coupled receptor signaling pathway"/>
    <property type="evidence" value="ECO:0007669"/>
    <property type="project" value="Ensembl"/>
</dbReference>
<dbReference type="GO" id="GO:0043066">
    <property type="term" value="P:negative regulation of apoptotic process"/>
    <property type="evidence" value="ECO:0000315"/>
    <property type="project" value="CAFA"/>
</dbReference>
<dbReference type="GO" id="GO:1902219">
    <property type="term" value="P:negative regulation of intrinsic apoptotic signaling pathway in response to osmotic stress"/>
    <property type="evidence" value="ECO:0000315"/>
    <property type="project" value="CAFA"/>
</dbReference>
<dbReference type="CDD" id="cd15139">
    <property type="entry name" value="7tmA_PGE2_EP2"/>
    <property type="match status" value="1"/>
</dbReference>
<dbReference type="FunFam" id="1.20.1070.10:FF:000212">
    <property type="entry name" value="Prostaglandin E2 receptor EP2 subtype"/>
    <property type="match status" value="1"/>
</dbReference>
<dbReference type="Gene3D" id="1.20.1070.10">
    <property type="entry name" value="Rhodopsin 7-helix transmembrane proteins"/>
    <property type="match status" value="1"/>
</dbReference>
<dbReference type="InterPro" id="IPR000276">
    <property type="entry name" value="GPCR_Rhodpsn"/>
</dbReference>
<dbReference type="InterPro" id="IPR017452">
    <property type="entry name" value="GPCR_Rhodpsn_7TM"/>
</dbReference>
<dbReference type="InterPro" id="IPR008365">
    <property type="entry name" value="Prostanoid_rcpt"/>
</dbReference>
<dbReference type="InterPro" id="IPR001923">
    <property type="entry name" value="Prostglndn_EP2_rcpt"/>
</dbReference>
<dbReference type="PANTHER" id="PTHR11866">
    <property type="entry name" value="G-PROTEIN COUPLED RECEPTOR FAMILY 1 MEMBER"/>
    <property type="match status" value="1"/>
</dbReference>
<dbReference type="PANTHER" id="PTHR11866:SF8">
    <property type="entry name" value="PROSTAGLANDIN E2 RECEPTOR EP2 SUBTYPE"/>
    <property type="match status" value="1"/>
</dbReference>
<dbReference type="Pfam" id="PF00001">
    <property type="entry name" value="7tm_1"/>
    <property type="match status" value="1"/>
</dbReference>
<dbReference type="PRINTS" id="PR00237">
    <property type="entry name" value="GPCRRHODOPSN"/>
</dbReference>
<dbReference type="PRINTS" id="PR01788">
    <property type="entry name" value="PROSTANOIDR"/>
</dbReference>
<dbReference type="PRINTS" id="PR00581">
    <property type="entry name" value="PRSTNOIDEP2R"/>
</dbReference>
<dbReference type="SUPFAM" id="SSF81321">
    <property type="entry name" value="Family A G protein-coupled receptor-like"/>
    <property type="match status" value="1"/>
</dbReference>
<dbReference type="PROSITE" id="PS00237">
    <property type="entry name" value="G_PROTEIN_RECEP_F1_1"/>
    <property type="match status" value="1"/>
</dbReference>
<dbReference type="PROSITE" id="PS50262">
    <property type="entry name" value="G_PROTEIN_RECEP_F1_2"/>
    <property type="match status" value="1"/>
</dbReference>
<organism>
    <name type="scientific">Canis lupus familiaris</name>
    <name type="common">Dog</name>
    <name type="synonym">Canis familiaris</name>
    <dbReference type="NCBI Taxonomy" id="9615"/>
    <lineage>
        <taxon>Eukaryota</taxon>
        <taxon>Metazoa</taxon>
        <taxon>Chordata</taxon>
        <taxon>Craniata</taxon>
        <taxon>Vertebrata</taxon>
        <taxon>Euteleostomi</taxon>
        <taxon>Mammalia</taxon>
        <taxon>Eutheria</taxon>
        <taxon>Laurasiatheria</taxon>
        <taxon>Carnivora</taxon>
        <taxon>Caniformia</taxon>
        <taxon>Canidae</taxon>
        <taxon>Canis</taxon>
    </lineage>
</organism>
<keyword id="KW-1003">Cell membrane</keyword>
<keyword id="KW-1015">Disulfide bond</keyword>
<keyword id="KW-0297">G-protein coupled receptor</keyword>
<keyword id="KW-0325">Glycoprotein</keyword>
<keyword id="KW-0472">Membrane</keyword>
<keyword id="KW-0675">Receptor</keyword>
<keyword id="KW-1185">Reference proteome</keyword>
<keyword id="KW-0807">Transducer</keyword>
<keyword id="KW-0812">Transmembrane</keyword>
<keyword id="KW-1133">Transmembrane helix</keyword>
<feature type="chain" id="PRO_0000070053" description="Prostaglandin E2 receptor EP2 subtype">
    <location>
        <begin position="1"/>
        <end position="361"/>
    </location>
</feature>
<feature type="topological domain" description="Extracellular" evidence="2">
    <location>
        <begin position="1"/>
        <end position="23"/>
    </location>
</feature>
<feature type="transmembrane region" description="Helical; Name=1" evidence="2">
    <location>
        <begin position="24"/>
        <end position="47"/>
    </location>
</feature>
<feature type="topological domain" description="Cytoplasmic" evidence="2">
    <location>
        <begin position="48"/>
        <end position="65"/>
    </location>
</feature>
<feature type="transmembrane region" description="Helical; Name=2" evidence="2">
    <location>
        <begin position="66"/>
        <end position="91"/>
    </location>
</feature>
<feature type="topological domain" description="Extracellular" evidence="2">
    <location>
        <begin position="92"/>
        <end position="111"/>
    </location>
</feature>
<feature type="transmembrane region" description="Helical; Name=3" evidence="2">
    <location>
        <begin position="112"/>
        <end position="132"/>
    </location>
</feature>
<feature type="topological domain" description="Cytoplasmic" evidence="2">
    <location>
        <begin position="133"/>
        <end position="151"/>
    </location>
</feature>
<feature type="transmembrane region" description="Helical; Name=4" evidence="2">
    <location>
        <begin position="152"/>
        <end position="176"/>
    </location>
</feature>
<feature type="topological domain" description="Extracellular" evidence="2">
    <location>
        <begin position="177"/>
        <end position="198"/>
    </location>
</feature>
<feature type="transmembrane region" description="Helical; Name=5" evidence="2">
    <location>
        <begin position="199"/>
        <end position="223"/>
    </location>
</feature>
<feature type="topological domain" description="Cytoplasmic" evidence="2">
    <location>
        <begin position="224"/>
        <end position="262"/>
    </location>
</feature>
<feature type="transmembrane region" description="Helical; Name=6" evidence="2">
    <location>
        <begin position="263"/>
        <end position="286"/>
    </location>
</feature>
<feature type="topological domain" description="Extracellular" evidence="2">
    <location>
        <begin position="287"/>
        <end position="299"/>
    </location>
</feature>
<feature type="transmembrane region" description="Helical; Name=7" evidence="2">
    <location>
        <begin position="300"/>
        <end position="323"/>
    </location>
</feature>
<feature type="topological domain" description="Cytoplasmic" evidence="2">
    <location>
        <begin position="324"/>
        <end position="361"/>
    </location>
</feature>
<feature type="region of interest" description="Disordered" evidence="4">
    <location>
        <begin position="1"/>
        <end position="21"/>
    </location>
</feature>
<feature type="region of interest" description="Disordered" evidence="4">
    <location>
        <begin position="230"/>
        <end position="253"/>
    </location>
</feature>
<feature type="compositionally biased region" description="Polar residues" evidence="4">
    <location>
        <begin position="1"/>
        <end position="10"/>
    </location>
</feature>
<feature type="glycosylation site" description="N-linked (GlcNAc...) asparagine" evidence="2">
    <location>
        <position position="6"/>
    </location>
</feature>
<feature type="glycosylation site" description="N-linked (GlcNAc...) asparagine" evidence="2">
    <location>
        <position position="96"/>
    </location>
</feature>
<feature type="glycosylation site" description="N-linked (GlcNAc...) asparagine" evidence="2">
    <location>
        <position position="287"/>
    </location>
</feature>
<feature type="disulfide bond" evidence="3">
    <location>
        <begin position="109"/>
        <end position="187"/>
    </location>
</feature>
<accession>Q9XT82</accession>
<name>PE2R2_CANLF</name>
<gene>
    <name type="primary">PTGER2</name>
</gene>
<protein>
    <recommendedName>
        <fullName>Prostaglandin E2 receptor EP2 subtype</fullName>
        <shortName>PGE receptor EP2 subtype</shortName>
        <shortName>PGE2 receptor EP2 subtype</shortName>
    </recommendedName>
    <alternativeName>
        <fullName>Prostanoid EP2 receptor</fullName>
    </alternativeName>
</protein>
<evidence type="ECO:0000250" key="1"/>
<evidence type="ECO:0000255" key="2"/>
<evidence type="ECO:0000255" key="3">
    <source>
        <dbReference type="PROSITE-ProRule" id="PRU00521"/>
    </source>
</evidence>
<evidence type="ECO:0000256" key="4">
    <source>
        <dbReference type="SAM" id="MobiDB-lite"/>
    </source>
</evidence>
<sequence length="361" mass="40275">MGSISNNSGSEDCESREWLPSGESPAISSAMFSAGVLGNLIALALLARRWRGDAGRRAGRGNSISLFHVLVTELVFTDLLGTCLISPVVLASYARNQTLMALEPERRACTYFAFAMTFFSLATMLMLFAMALERYLSIGRPYFYQRHVTRRGGLAVLPTIYTVSLLFCSLPLLGYGQYVQYCPGTWCFIRHGRTAYLQLYATLLLLLIVAVLACNFSVILNLIRMHRRSGRSRCGPSLGSCRDGSGTRRRGERVSVAEETDHLILLAIMTITFAICSLPFTIFAYMNETSSRREKWDLQALRFLSINSIIDPWVFAIFRPPVLRLMRSVLCCRVSLRAQDATQTSCSIQSNASRLTFVDTS</sequence>
<comment type="function">
    <text evidence="1">Receptor for prostaglandin E2 (PGE2). The activity of this receptor is mediated by G(s) proteins that stimulate adenylate cyclase. The subsequent raise in intracellular cAMP is responsible for the relaxing effect of this receptor on smooth muscle (By similarity).</text>
</comment>
<comment type="subcellular location">
    <subcellularLocation>
        <location>Cell membrane</location>
        <topology>Multi-pass membrane protein</topology>
    </subcellularLocation>
</comment>
<comment type="similarity">
    <text evidence="3">Belongs to the G-protein coupled receptor 1 family.</text>
</comment>
<reference key="1">
    <citation type="journal article" date="1999" name="Prostaglandins Other Lipid Mediat.">
        <title>Molecular cloning and characterization of the canine prostaglandin E receptor EP2 subtype.</title>
        <authorList>
            <person name="Hibbs T.A."/>
            <person name="Lu B."/>
            <person name="Smock S.L."/>
            <person name="Vestergaard P."/>
            <person name="Pan L.C."/>
            <person name="Owen T.A."/>
        </authorList>
    </citation>
    <scope>NUCLEOTIDE SEQUENCE [MRNA]</scope>
    <source>
        <tissue>Kidney</tissue>
    </source>
</reference>
<proteinExistence type="evidence at transcript level"/>